<protein>
    <recommendedName>
        <fullName>5-hydroxyisourate hydrolase</fullName>
        <shortName>HIU hydrolase</shortName>
        <shortName>HIUHase</shortName>
        <ecNumber>3.5.2.17</ecNumber>
    </recommendedName>
</protein>
<accession>Q9KET9</accession>
<evidence type="ECO:0000250" key="1"/>
<evidence type="ECO:0000305" key="2"/>
<proteinExistence type="inferred from homology"/>
<gene>
    <name type="ordered locus">BH0760</name>
</gene>
<name>HIUH_HALH5</name>
<reference key="1">
    <citation type="journal article" date="2000" name="Nucleic Acids Res.">
        <title>Complete genome sequence of the alkaliphilic bacterium Bacillus halodurans and genomic sequence comparison with Bacillus subtilis.</title>
        <authorList>
            <person name="Takami H."/>
            <person name="Nakasone K."/>
            <person name="Takaki Y."/>
            <person name="Maeno G."/>
            <person name="Sasaki R."/>
            <person name="Masui N."/>
            <person name="Fuji F."/>
            <person name="Hirama C."/>
            <person name="Nakamura Y."/>
            <person name="Ogasawara N."/>
            <person name="Kuhara S."/>
            <person name="Horikoshi K."/>
        </authorList>
    </citation>
    <scope>NUCLEOTIDE SEQUENCE [LARGE SCALE GENOMIC DNA]</scope>
    <source>
        <strain>ATCC BAA-125 / DSM 18197 / FERM 7344 / JCM 9153 / C-125</strain>
    </source>
</reference>
<sequence length="119" mass="13209">MSGKVTTHVLDTSCGKPAAGVVVELWRIVEGGESELLTKAVTNQDGRLDKPLLTENKMARGVYELRFQVGDYFLRNGFVNQAYPFLHVIPVRFGLEDVNEHYHVPLLVAPGGYSTYRGS</sequence>
<dbReference type="EC" id="3.5.2.17"/>
<dbReference type="EMBL" id="BA000004">
    <property type="protein sequence ID" value="BAB04479.1"/>
    <property type="molecule type" value="Genomic_DNA"/>
</dbReference>
<dbReference type="PIR" id="H83744">
    <property type="entry name" value="H83744"/>
</dbReference>
<dbReference type="RefSeq" id="WP_010896933.1">
    <property type="nucleotide sequence ID" value="NC_002570.2"/>
</dbReference>
<dbReference type="SMR" id="Q9KET9"/>
<dbReference type="STRING" id="272558.gene:10726634"/>
<dbReference type="KEGG" id="bha:BH0760"/>
<dbReference type="eggNOG" id="COG2351">
    <property type="taxonomic scope" value="Bacteria"/>
</dbReference>
<dbReference type="HOGENOM" id="CLU_115536_1_1_9"/>
<dbReference type="OrthoDB" id="9792386at2"/>
<dbReference type="UniPathway" id="UPA00394">
    <property type="reaction ID" value="UER00651"/>
</dbReference>
<dbReference type="Proteomes" id="UP000001258">
    <property type="component" value="Chromosome"/>
</dbReference>
<dbReference type="GO" id="GO:0033971">
    <property type="term" value="F:hydroxyisourate hydrolase activity"/>
    <property type="evidence" value="ECO:0007669"/>
    <property type="project" value="UniProtKB-EC"/>
</dbReference>
<dbReference type="GO" id="GO:0006144">
    <property type="term" value="P:purine nucleobase metabolic process"/>
    <property type="evidence" value="ECO:0007669"/>
    <property type="project" value="UniProtKB-KW"/>
</dbReference>
<dbReference type="GO" id="GO:0019628">
    <property type="term" value="P:urate catabolic process"/>
    <property type="evidence" value="ECO:0007669"/>
    <property type="project" value="UniProtKB-UniPathway"/>
</dbReference>
<dbReference type="CDD" id="cd05822">
    <property type="entry name" value="TLP_HIUase"/>
    <property type="match status" value="1"/>
</dbReference>
<dbReference type="Gene3D" id="2.60.40.180">
    <property type="entry name" value="Transthyretin/hydroxyisourate hydrolase domain"/>
    <property type="match status" value="1"/>
</dbReference>
<dbReference type="InterPro" id="IPR014306">
    <property type="entry name" value="Hydroxyisourate_hydrolase"/>
</dbReference>
<dbReference type="InterPro" id="IPR023418">
    <property type="entry name" value="Thyroxine_BS"/>
</dbReference>
<dbReference type="InterPro" id="IPR023416">
    <property type="entry name" value="Transthyretin/HIU_hydrolase_d"/>
</dbReference>
<dbReference type="InterPro" id="IPR036817">
    <property type="entry name" value="Transthyretin/HIU_hydrolase_sf"/>
</dbReference>
<dbReference type="InterPro" id="IPR023419">
    <property type="entry name" value="Transthyretin_CS"/>
</dbReference>
<dbReference type="NCBIfam" id="TIGR02962">
    <property type="entry name" value="hdxy_isourate"/>
    <property type="match status" value="1"/>
</dbReference>
<dbReference type="PANTHER" id="PTHR10395:SF7">
    <property type="entry name" value="5-HYDROXYISOURATE HYDROLASE"/>
    <property type="match status" value="1"/>
</dbReference>
<dbReference type="PANTHER" id="PTHR10395">
    <property type="entry name" value="URICASE AND TRANSTHYRETIN-RELATED"/>
    <property type="match status" value="1"/>
</dbReference>
<dbReference type="Pfam" id="PF00576">
    <property type="entry name" value="Transthyretin"/>
    <property type="match status" value="1"/>
</dbReference>
<dbReference type="SUPFAM" id="SSF49472">
    <property type="entry name" value="Transthyretin (synonym: prealbumin)"/>
    <property type="match status" value="1"/>
</dbReference>
<dbReference type="PROSITE" id="PS00768">
    <property type="entry name" value="TRANSTHYRETIN_1"/>
    <property type="match status" value="1"/>
</dbReference>
<dbReference type="PROSITE" id="PS00769">
    <property type="entry name" value="TRANSTHYRETIN_2"/>
    <property type="match status" value="1"/>
</dbReference>
<comment type="function">
    <text evidence="1">Catalyzes the hydrolysis of 5-hydroxyisourate (HIU) to 2-oxo-4-hydroxy-4-carboxy-5-ureidoimidazoline (OHCU).</text>
</comment>
<comment type="catalytic activity">
    <reaction>
        <text>5-hydroxyisourate + H2O = 5-hydroxy-2-oxo-4-ureido-2,5-dihydro-1H-imidazole-5-carboxylate + H(+)</text>
        <dbReference type="Rhea" id="RHEA:23736"/>
        <dbReference type="ChEBI" id="CHEBI:15377"/>
        <dbReference type="ChEBI" id="CHEBI:15378"/>
        <dbReference type="ChEBI" id="CHEBI:18072"/>
        <dbReference type="ChEBI" id="CHEBI:58639"/>
        <dbReference type="EC" id="3.5.2.17"/>
    </reaction>
</comment>
<comment type="pathway">
    <text>Purine metabolism; urate degradation; (S)-allantoin from urate: step 2/3.</text>
</comment>
<comment type="subunit">
    <text evidence="1">Homotetramer.</text>
</comment>
<comment type="miscellaneous">
    <text>HIU hydrolysis also occurs spontaneously, but more slowly.</text>
</comment>
<comment type="similarity">
    <text evidence="2">Belongs to the transthyretin family. 5-hydroxyisourate hydrolase subfamily.</text>
</comment>
<feature type="chain" id="PRO_0000050608" description="5-hydroxyisourate hydrolase">
    <location>
        <begin position="1"/>
        <end position="119"/>
    </location>
</feature>
<feature type="binding site" evidence="1">
    <location>
        <position position="8"/>
    </location>
    <ligand>
        <name>substrate</name>
    </ligand>
</feature>
<feature type="binding site" evidence="1">
    <location>
        <position position="47"/>
    </location>
    <ligand>
        <name>substrate</name>
    </ligand>
</feature>
<feature type="binding site" evidence="1">
    <location>
        <position position="116"/>
    </location>
    <ligand>
        <name>substrate</name>
    </ligand>
</feature>
<organism>
    <name type="scientific">Halalkalibacterium halodurans (strain ATCC BAA-125 / DSM 18197 / FERM 7344 / JCM 9153 / C-125)</name>
    <name type="common">Bacillus halodurans</name>
    <dbReference type="NCBI Taxonomy" id="272558"/>
    <lineage>
        <taxon>Bacteria</taxon>
        <taxon>Bacillati</taxon>
        <taxon>Bacillota</taxon>
        <taxon>Bacilli</taxon>
        <taxon>Bacillales</taxon>
        <taxon>Bacillaceae</taxon>
        <taxon>Halalkalibacterium (ex Joshi et al. 2022)</taxon>
    </lineage>
</organism>
<keyword id="KW-0378">Hydrolase</keyword>
<keyword id="KW-0659">Purine metabolism</keyword>
<keyword id="KW-1185">Reference proteome</keyword>